<keyword id="KW-1185">Reference proteome</keyword>
<keyword id="KW-0732">Signal</keyword>
<reference key="1">
    <citation type="submission" date="2009-01" db="EMBL/GenBank/DDBJ databases">
        <title>Complete sequence of Clostridium cellulolyticum H10.</title>
        <authorList>
            <consortium name="US DOE Joint Genome Institute"/>
            <person name="Lucas S."/>
            <person name="Copeland A."/>
            <person name="Lapidus A."/>
            <person name="Glavina del Rio T."/>
            <person name="Dalin E."/>
            <person name="Tice H."/>
            <person name="Bruce D."/>
            <person name="Goodwin L."/>
            <person name="Pitluck S."/>
            <person name="Chertkov O."/>
            <person name="Saunders E."/>
            <person name="Brettin T."/>
            <person name="Detter J.C."/>
            <person name="Han C."/>
            <person name="Larimer F."/>
            <person name="Land M."/>
            <person name="Hauser L."/>
            <person name="Kyrpides N."/>
            <person name="Ivanova N."/>
            <person name="Zhou J."/>
            <person name="Richardson P."/>
        </authorList>
    </citation>
    <scope>NUCLEOTIDE SEQUENCE [LARGE SCALE GENOMIC DNA]</scope>
    <source>
        <strain>ATCC 35319 / DSM 5812 / JCM 6584 / H10</strain>
    </source>
</reference>
<gene>
    <name type="ordered locus">Ccel_3195</name>
</gene>
<organism>
    <name type="scientific">Ruminiclostridium cellulolyticum (strain ATCC 35319 / DSM 5812 / JCM 6584 / H10)</name>
    <name type="common">Clostridium cellulolyticum</name>
    <dbReference type="NCBI Taxonomy" id="394503"/>
    <lineage>
        <taxon>Bacteria</taxon>
        <taxon>Bacillati</taxon>
        <taxon>Bacillota</taxon>
        <taxon>Clostridia</taxon>
        <taxon>Eubacteriales</taxon>
        <taxon>Oscillospiraceae</taxon>
        <taxon>Ruminiclostridium</taxon>
    </lineage>
</organism>
<accession>B8I0F9</accession>
<feature type="signal peptide" evidence="1">
    <location>
        <begin position="1"/>
        <end position="28"/>
    </location>
</feature>
<feature type="chain" id="PRO_5000429960" description="Uncharacterized protein Ccel_3195">
    <location>
        <begin position="29"/>
        <end position="361"/>
    </location>
</feature>
<sequence length="361" mass="39532">MSKSKFTKIIVVICIAAMFITGTSILSFAEDGTVQQSNVQIVRFDADSYNITPNQSVTISWKVLNADKVEITNMAGQGLSHEGSLEVWLMETTTFTLKAYDANGEVTSRSITVNLEHLEIKKFTVSRNEISAGETVELSWDVSGATDVSIPELTEKDLPTFESIQIQPLKTTTYTLTAYGLDGGVVKGEVTVKVNEPEITDFSADKYELDPGDSATLSWNAPGFQTIKIVGLEDEGHLPLTGTLKVSPQQTTTYTLEATTYDGIVKSKQITVKVKKPVITSFTVDKPSITKGEMFKLSWTSEYADHCYLTTNYGNKLLNRQPNGGITVASSRDITFELTAVDKYGNEVKSKIEIKVSTGVN</sequence>
<proteinExistence type="inferred from homology"/>
<name>Y3195_RUMCH</name>
<evidence type="ECO:0000255" key="1"/>
<dbReference type="EMBL" id="CP001348">
    <property type="protein sequence ID" value="ACL77485.1"/>
    <property type="molecule type" value="Genomic_DNA"/>
</dbReference>
<dbReference type="RefSeq" id="WP_015926543.1">
    <property type="nucleotide sequence ID" value="NC_011898.1"/>
</dbReference>
<dbReference type="STRING" id="394503.Ccel_3195"/>
<dbReference type="KEGG" id="cce:Ccel_3195"/>
<dbReference type="eggNOG" id="COG3485">
    <property type="taxonomic scope" value="Bacteria"/>
</dbReference>
<dbReference type="HOGENOM" id="CLU_766634_0_0_9"/>
<dbReference type="OrthoDB" id="51164at2"/>
<dbReference type="Proteomes" id="UP000001349">
    <property type="component" value="Chromosome"/>
</dbReference>
<protein>
    <recommendedName>
        <fullName>Uncharacterized protein Ccel_3195</fullName>
    </recommendedName>
</protein>